<feature type="chain" id="PRO_0000327182" description="Protoheme IX farnesyltransferase">
    <location>
        <begin position="1"/>
        <end position="316"/>
    </location>
</feature>
<feature type="transmembrane region" description="Helical" evidence="1">
    <location>
        <begin position="29"/>
        <end position="49"/>
    </location>
</feature>
<feature type="transmembrane region" description="Helical" evidence="1">
    <location>
        <begin position="54"/>
        <end position="74"/>
    </location>
</feature>
<feature type="transmembrane region" description="Helical" evidence="1">
    <location>
        <begin position="102"/>
        <end position="122"/>
    </location>
</feature>
<feature type="transmembrane region" description="Helical" evidence="1">
    <location>
        <begin position="123"/>
        <end position="143"/>
    </location>
</feature>
<feature type="transmembrane region" description="Helical" evidence="1">
    <location>
        <begin position="151"/>
        <end position="171"/>
    </location>
</feature>
<feature type="transmembrane region" description="Helical" evidence="1">
    <location>
        <begin position="179"/>
        <end position="199"/>
    </location>
</feature>
<feature type="transmembrane region" description="Helical" evidence="1">
    <location>
        <begin position="224"/>
        <end position="241"/>
    </location>
</feature>
<feature type="transmembrane region" description="Helical" evidence="1">
    <location>
        <begin position="245"/>
        <end position="267"/>
    </location>
</feature>
<feature type="transmembrane region" description="Helical" evidence="1">
    <location>
        <begin position="283"/>
        <end position="303"/>
    </location>
</feature>
<proteinExistence type="inferred from homology"/>
<organism>
    <name type="scientific">Synechocystis sp. (strain ATCC 27184 / PCC 6803 / Kazusa)</name>
    <dbReference type="NCBI Taxonomy" id="1111708"/>
    <lineage>
        <taxon>Bacteria</taxon>
        <taxon>Bacillati</taxon>
        <taxon>Cyanobacteriota</taxon>
        <taxon>Cyanophyceae</taxon>
        <taxon>Synechococcales</taxon>
        <taxon>Merismopediaceae</taxon>
        <taxon>Synechocystis</taxon>
    </lineage>
</organism>
<gene>
    <name evidence="1" type="primary">ctaB</name>
    <name type="ordered locus">sll1899</name>
</gene>
<evidence type="ECO:0000255" key="1">
    <source>
        <dbReference type="HAMAP-Rule" id="MF_00154"/>
    </source>
</evidence>
<name>COXX_SYNY3</name>
<reference key="1">
    <citation type="journal article" date="1996" name="DNA Res.">
        <title>Sequence analysis of the genome of the unicellular cyanobacterium Synechocystis sp. strain PCC6803. II. Sequence determination of the entire genome and assignment of potential protein-coding regions.</title>
        <authorList>
            <person name="Kaneko T."/>
            <person name="Sato S."/>
            <person name="Kotani H."/>
            <person name="Tanaka A."/>
            <person name="Asamizu E."/>
            <person name="Nakamura Y."/>
            <person name="Miyajima N."/>
            <person name="Hirosawa M."/>
            <person name="Sugiura M."/>
            <person name="Sasamoto S."/>
            <person name="Kimura T."/>
            <person name="Hosouchi T."/>
            <person name="Matsuno A."/>
            <person name="Muraki A."/>
            <person name="Nakazaki N."/>
            <person name="Naruo K."/>
            <person name="Okumura S."/>
            <person name="Shimpo S."/>
            <person name="Takeuchi C."/>
            <person name="Wada T."/>
            <person name="Watanabe A."/>
            <person name="Yamada M."/>
            <person name="Yasuda M."/>
            <person name="Tabata S."/>
        </authorList>
    </citation>
    <scope>NUCLEOTIDE SEQUENCE [LARGE SCALE GENOMIC DNA]</scope>
    <source>
        <strain>ATCC 27184 / PCC 6803 / Kazusa</strain>
    </source>
</reference>
<comment type="function">
    <text evidence="1">Converts heme B (protoheme IX) to heme O by substitution of the vinyl group on carbon 2 of heme B porphyrin ring with a hydroxyethyl farnesyl side group.</text>
</comment>
<comment type="catalytic activity">
    <reaction evidence="1">
        <text>heme b + (2E,6E)-farnesyl diphosphate + H2O = Fe(II)-heme o + diphosphate</text>
        <dbReference type="Rhea" id="RHEA:28070"/>
        <dbReference type="ChEBI" id="CHEBI:15377"/>
        <dbReference type="ChEBI" id="CHEBI:33019"/>
        <dbReference type="ChEBI" id="CHEBI:60344"/>
        <dbReference type="ChEBI" id="CHEBI:60530"/>
        <dbReference type="ChEBI" id="CHEBI:175763"/>
        <dbReference type="EC" id="2.5.1.141"/>
    </reaction>
</comment>
<comment type="pathway">
    <text evidence="1">Porphyrin-containing compound metabolism; heme O biosynthesis; heme O from protoheme: step 1/1.</text>
</comment>
<comment type="subcellular location">
    <subcellularLocation>
        <location evidence="1">Cell inner membrane</location>
        <topology evidence="1">Multi-pass membrane protein</topology>
    </subcellularLocation>
</comment>
<comment type="miscellaneous">
    <text evidence="1">Carbon 2 of the heme B porphyrin ring is defined according to the Fischer nomenclature.</text>
</comment>
<comment type="similarity">
    <text evidence="1">Belongs to the UbiA prenyltransferase family. Protoheme IX farnesyltransferase subfamily.</text>
</comment>
<keyword id="KW-0997">Cell inner membrane</keyword>
<keyword id="KW-1003">Cell membrane</keyword>
<keyword id="KW-0350">Heme biosynthesis</keyword>
<keyword id="KW-0472">Membrane</keyword>
<keyword id="KW-1185">Reference proteome</keyword>
<keyword id="KW-0808">Transferase</keyword>
<keyword id="KW-0812">Transmembrane</keyword>
<keyword id="KW-1133">Transmembrane helix</keyword>
<sequence length="316" mass="34858">MVTSTKIHRQHDSMGAVCKSYYQLTKPRIIPLLLITTAASMWIASEGRVDLPKLLITLLGGTLAAASAQTLNCIYDQDIDYEMLRTRARPIPAGKVQPRHALIFALALGVLSFALLATFVNVLSGCLALSGIVFYMLVYTHWLKRHTAQNIVIGGAAGSIPPLVGWAAVTGDLSWTPWVLFALIFLWTPPHFWALALMIKDDYAQVNVPMLPVIAGEEKTVSQIWYYSLLVVPFSLLLVYPLHQLGILYLAIAIILGGQFLVKAWQLKQAPGDRDLARGLFKFSIFYLMLLCLAMVIDSLPVTHQLVAQMGTLLLG</sequence>
<protein>
    <recommendedName>
        <fullName evidence="1">Protoheme IX farnesyltransferase</fullName>
        <ecNumber evidence="1">2.5.1.141</ecNumber>
    </recommendedName>
    <alternativeName>
        <fullName evidence="1">Heme B farnesyltransferase</fullName>
    </alternativeName>
    <alternativeName>
        <fullName evidence="1">Heme O synthase</fullName>
    </alternativeName>
</protein>
<accession>Q79EF2</accession>
<dbReference type="EC" id="2.5.1.141" evidence="1"/>
<dbReference type="EMBL" id="BA000022">
    <property type="protein sequence ID" value="BAA18181.1"/>
    <property type="molecule type" value="Genomic_DNA"/>
</dbReference>
<dbReference type="SMR" id="Q79EF2"/>
<dbReference type="FunCoup" id="Q79EF2">
    <property type="interactions" value="479"/>
</dbReference>
<dbReference type="STRING" id="1148.gene:10499054"/>
<dbReference type="PaxDb" id="1148-1653266"/>
<dbReference type="EnsemblBacteria" id="BAA18181">
    <property type="protein sequence ID" value="BAA18181"/>
    <property type="gene ID" value="BAA18181"/>
</dbReference>
<dbReference type="KEGG" id="syn:sll1899"/>
<dbReference type="eggNOG" id="COG0109">
    <property type="taxonomic scope" value="Bacteria"/>
</dbReference>
<dbReference type="InParanoid" id="Q79EF2"/>
<dbReference type="PhylomeDB" id="Q79EF2"/>
<dbReference type="UniPathway" id="UPA00834">
    <property type="reaction ID" value="UER00712"/>
</dbReference>
<dbReference type="Proteomes" id="UP000001425">
    <property type="component" value="Chromosome"/>
</dbReference>
<dbReference type="GO" id="GO:0005886">
    <property type="term" value="C:plasma membrane"/>
    <property type="evidence" value="ECO:0007669"/>
    <property type="project" value="UniProtKB-SubCell"/>
</dbReference>
<dbReference type="GO" id="GO:0008495">
    <property type="term" value="F:protoheme IX farnesyltransferase activity"/>
    <property type="evidence" value="ECO:0000318"/>
    <property type="project" value="GO_Central"/>
</dbReference>
<dbReference type="GO" id="GO:0006783">
    <property type="term" value="P:heme biosynthetic process"/>
    <property type="evidence" value="ECO:0000318"/>
    <property type="project" value="GO_Central"/>
</dbReference>
<dbReference type="GO" id="GO:0048034">
    <property type="term" value="P:heme O biosynthetic process"/>
    <property type="evidence" value="ECO:0007669"/>
    <property type="project" value="UniProtKB-UniRule"/>
</dbReference>
<dbReference type="CDD" id="cd13957">
    <property type="entry name" value="PT_UbiA_Cox10"/>
    <property type="match status" value="1"/>
</dbReference>
<dbReference type="FunFam" id="1.10.357.140:FF:000001">
    <property type="entry name" value="Protoheme IX farnesyltransferase"/>
    <property type="match status" value="1"/>
</dbReference>
<dbReference type="Gene3D" id="1.10.357.140">
    <property type="entry name" value="UbiA prenyltransferase"/>
    <property type="match status" value="1"/>
</dbReference>
<dbReference type="HAMAP" id="MF_00154">
    <property type="entry name" value="CyoE_CtaB"/>
    <property type="match status" value="1"/>
</dbReference>
<dbReference type="InterPro" id="IPR006369">
    <property type="entry name" value="Protohaem_IX_farnesylTrfase"/>
</dbReference>
<dbReference type="InterPro" id="IPR000537">
    <property type="entry name" value="UbiA_prenyltransferase"/>
</dbReference>
<dbReference type="InterPro" id="IPR030470">
    <property type="entry name" value="UbiA_prenylTrfase_CS"/>
</dbReference>
<dbReference type="InterPro" id="IPR044878">
    <property type="entry name" value="UbiA_sf"/>
</dbReference>
<dbReference type="NCBIfam" id="TIGR01473">
    <property type="entry name" value="cyoE_ctaB"/>
    <property type="match status" value="1"/>
</dbReference>
<dbReference type="NCBIfam" id="NF003349">
    <property type="entry name" value="PRK04375.1-2"/>
    <property type="match status" value="1"/>
</dbReference>
<dbReference type="PANTHER" id="PTHR43448:SF7">
    <property type="entry name" value="4-HYDROXYBENZOATE SOLANESYLTRANSFERASE"/>
    <property type="match status" value="1"/>
</dbReference>
<dbReference type="PANTHER" id="PTHR43448">
    <property type="entry name" value="PROTOHEME IX FARNESYLTRANSFERASE, MITOCHONDRIAL"/>
    <property type="match status" value="1"/>
</dbReference>
<dbReference type="Pfam" id="PF01040">
    <property type="entry name" value="UbiA"/>
    <property type="match status" value="1"/>
</dbReference>
<dbReference type="PROSITE" id="PS00943">
    <property type="entry name" value="UBIA"/>
    <property type="match status" value="1"/>
</dbReference>